<comment type="function">
    <text evidence="3">Probably involved in acetate metabolism and not in the reduction of Fe(3+) chelates. May serve as a major route for NADP regeneration.</text>
</comment>
<comment type="cofactor">
    <cofactor evidence="1">
        <name>[4Fe-4S] cluster</name>
        <dbReference type="ChEBI" id="CHEBI:49883"/>
    </cofactor>
    <text evidence="1">Binds 1 [4Fe-4S] cluster.</text>
</comment>
<comment type="cofactor">
    <cofactor evidence="1">
        <name>FAD</name>
        <dbReference type="ChEBI" id="CHEBI:57692"/>
    </cofactor>
</comment>
<comment type="subunit">
    <text evidence="1">Heterotetramer with 2 alpha subunits.</text>
</comment>
<comment type="subcellular location">
    <subcellularLocation>
        <location evidence="3">Cell membrane</location>
        <topology evidence="3">Peripheral membrane protein</topology>
    </subcellularLocation>
</comment>
<comment type="disruption phenotype">
    <text evidence="3">SfrAB-null strain is unable to grow in the presence of acetate and fumarate unless an additional electron donor is present. Strongly reduced NADPH-dependent benzyl viologen reductase activity.</text>
</comment>
<organism>
    <name type="scientific">Geobacter sulfurreducens (strain DL-1 / KN400)</name>
    <dbReference type="NCBI Taxonomy" id="663917"/>
    <lineage>
        <taxon>Bacteria</taxon>
        <taxon>Pseudomonadati</taxon>
        <taxon>Thermodesulfobacteriota</taxon>
        <taxon>Desulfuromonadia</taxon>
        <taxon>Geobacterales</taxon>
        <taxon>Geobacteraceae</taxon>
        <taxon>Geobacter</taxon>
    </lineage>
</organism>
<sequence>MAQVVFSSWGRTIVDNRKGGEAQDVSFRLPTTLDGERQIAAFMGWDGIILYDLKVDVPAMAAEYMKRVQTQYCCGKCTPGKKGTKVLADVLAAIIEGRATEADLDTIDDLADLLTNCKCTLCQSSTIPVLDAVKHFREDFLAYITGIRKPANVHRFIDKYTAPCMDRCPAHIDIPAYIEAIKEYRFDESLDIIRDNMPLPSVCGRVCPHPCETHCRRKNVDDSVNIMVLKRSASDYEWMHNAAPPMQPKPQKNKKVAIVGAGPAGLACAYYLALEGYPCTIYEALPEGYGGGMIAVGIPPYRQPRHLLQRDIDIISSMGVDIIYDTRIGKDISLEELKQKFDAVFLAPGAHRSKPMGVEGEDKGYKGFLKGGIDFLREAYMGRPTGMGKKVVVVGGGNTAIDCVRVALREGAEESTLLYRRSRKEMPADVWEVDGADEEGVRFEFQVLPTRVLVDENEQVTGVECVRMALGEPDASGRRRPEPVPGSEFVVECDTVIPAIGQDPDLSFIPDNLGIDITKWNTVVTKYVPLKDAAGKDLKDGMGNPLARVLITDLEGVFAGGDAEIGPLTVVACIGNAHRAARVIQRWLEEGKAYLTEDELMEDILTNMPVYDKNEKVPWLDSRERAHQAEVHGQERASKGNYQEVELGFVDTQAVEEAERCLRCYRVAMAAI</sequence>
<keyword id="KW-0004">4Fe-4S</keyword>
<keyword id="KW-1003">Cell membrane</keyword>
<keyword id="KW-0274">FAD</keyword>
<keyword id="KW-0285">Flavoprotein</keyword>
<keyword id="KW-0408">Iron</keyword>
<keyword id="KW-0411">Iron-sulfur</keyword>
<keyword id="KW-0472">Membrane</keyword>
<keyword id="KW-0479">Metal-binding</keyword>
<keyword id="KW-0521">NADP</keyword>
<keyword id="KW-0560">Oxidoreductase</keyword>
<accession>D7AF64</accession>
<gene>
    <name type="primary">sfrB</name>
    <name type="ordered locus">KN400_0499</name>
</gene>
<reference key="1">
    <citation type="journal article" date="2010" name="PLoS ONE">
        <title>De Novo assembly of the complete genome of an enhanced electricity-producing variant of Geobacter sulfurreducens using only short reads.</title>
        <authorList>
            <person name="Nagarajan H."/>
            <person name="Butler J.E."/>
            <person name="Klimes A."/>
            <person name="Qiu Y."/>
            <person name="Zengler K."/>
            <person name="Ward J."/>
            <person name="Young N.D."/>
            <person name="Methe B.A."/>
            <person name="Palsson B.O."/>
            <person name="Lovley D.R."/>
            <person name="Barrett C.L."/>
        </authorList>
    </citation>
    <scope>NUCLEOTIDE SEQUENCE [LARGE SCALE GENOMIC DNA]</scope>
    <source>
        <strain>DL-1 / KN400</strain>
    </source>
</reference>
<reference key="2">
    <citation type="journal article" date="2007" name="Microbiology">
        <title>Involvement of Geobacter sulfurreducens SfrAB in acetate metabolism rather than intracellular, respiration-linked Fe(III) citrate reduction.</title>
        <authorList>
            <person name="Coppi M.V."/>
            <person name="O'neil R.A."/>
            <person name="Leang C."/>
            <person name="Kaufmann F."/>
            <person name="Methe B.A."/>
            <person name="Nevin K.P."/>
            <person name="Woodard T.L."/>
            <person name="Liu A."/>
            <person name="Lovley D.R."/>
        </authorList>
    </citation>
    <scope>FUNCTION</scope>
    <scope>SUBCELLULAR LOCATION</scope>
    <scope>DISRUPTION PHENOTYPE</scope>
    <source>
        <strain>DL-1 / KN400</strain>
    </source>
</reference>
<feature type="initiator methionine" description="Removed" evidence="1">
    <location>
        <position position="1"/>
    </location>
</feature>
<feature type="chain" id="PRO_0000429036" description="NADPH-Fe(3+) oxidoreductase subunit beta">
    <location>
        <begin position="2"/>
        <end position="672"/>
    </location>
</feature>
<feature type="binding site" evidence="2">
    <location>
        <position position="203"/>
    </location>
    <ligand>
        <name>[4Fe-4S] cluster</name>
        <dbReference type="ChEBI" id="CHEBI:49883"/>
    </ligand>
</feature>
<feature type="binding site" evidence="2">
    <location>
        <position position="207"/>
    </location>
    <ligand>
        <name>[4Fe-4S] cluster</name>
        <dbReference type="ChEBI" id="CHEBI:49883"/>
    </ligand>
</feature>
<feature type="binding site" evidence="2">
    <location>
        <position position="211"/>
    </location>
    <ligand>
        <name>[4Fe-4S] cluster</name>
        <dbReference type="ChEBI" id="CHEBI:49883"/>
    </ligand>
</feature>
<feature type="binding site" evidence="2">
    <location>
        <position position="215"/>
    </location>
    <ligand>
        <name>[4Fe-4S] cluster</name>
        <dbReference type="ChEBI" id="CHEBI:49883"/>
    </ligand>
</feature>
<feature type="binding site" evidence="2">
    <location>
        <begin position="254"/>
        <end position="283"/>
    </location>
    <ligand>
        <name>FAD</name>
        <dbReference type="ChEBI" id="CHEBI:57692"/>
    </ligand>
</feature>
<feature type="binding site" evidence="2">
    <location>
        <begin position="388"/>
        <end position="421"/>
    </location>
    <ligand>
        <name>NADP(+)</name>
        <dbReference type="ChEBI" id="CHEBI:58349"/>
    </ligand>
</feature>
<feature type="binding site" evidence="2">
    <location>
        <begin position="552"/>
        <end position="562"/>
    </location>
    <ligand>
        <name>FAD</name>
        <dbReference type="ChEBI" id="CHEBI:57692"/>
    </ligand>
</feature>
<proteinExistence type="inferred from homology"/>
<protein>
    <recommendedName>
        <fullName>NADPH-Fe(3+) oxidoreductase subunit beta</fullName>
        <ecNumber>1.-.-.-</ecNumber>
    </recommendedName>
    <alternativeName>
        <fullName>Soluble Fe(3+) reductase beta subunit</fullName>
    </alternativeName>
</protein>
<dbReference type="EC" id="1.-.-.-"/>
<dbReference type="EMBL" id="CP002031">
    <property type="protein sequence ID" value="ADI83362.1"/>
    <property type="molecule type" value="Genomic_DNA"/>
</dbReference>
<dbReference type="RefSeq" id="WP_010941178.1">
    <property type="nucleotide sequence ID" value="NC_017454.1"/>
</dbReference>
<dbReference type="SMR" id="D7AF64"/>
<dbReference type="KEGG" id="gsk:KN400_0499"/>
<dbReference type="PATRIC" id="fig|663917.3.peg.506"/>
<dbReference type="HOGENOM" id="CLU_000422_3_4_7"/>
<dbReference type="GO" id="GO:0005886">
    <property type="term" value="C:plasma membrane"/>
    <property type="evidence" value="ECO:0007669"/>
    <property type="project" value="UniProtKB-SubCell"/>
</dbReference>
<dbReference type="GO" id="GO:0051539">
    <property type="term" value="F:4 iron, 4 sulfur cluster binding"/>
    <property type="evidence" value="ECO:0007669"/>
    <property type="project" value="UniProtKB-KW"/>
</dbReference>
<dbReference type="GO" id="GO:0046872">
    <property type="term" value="F:metal ion binding"/>
    <property type="evidence" value="ECO:0007669"/>
    <property type="project" value="UniProtKB-KW"/>
</dbReference>
<dbReference type="GO" id="GO:0016491">
    <property type="term" value="F:oxidoreductase activity"/>
    <property type="evidence" value="ECO:0007669"/>
    <property type="project" value="UniProtKB-KW"/>
</dbReference>
<dbReference type="FunFam" id="3.50.50.60:FF:000041">
    <property type="entry name" value="Glutamate synthase, small subunit"/>
    <property type="match status" value="1"/>
</dbReference>
<dbReference type="Gene3D" id="1.10.1060.10">
    <property type="entry name" value="Alpha-helical ferredoxin"/>
    <property type="match status" value="1"/>
</dbReference>
<dbReference type="Gene3D" id="3.50.50.60">
    <property type="entry name" value="FAD/NAD(P)-binding domain"/>
    <property type="match status" value="3"/>
</dbReference>
<dbReference type="InterPro" id="IPR028261">
    <property type="entry name" value="DPD_II"/>
</dbReference>
<dbReference type="InterPro" id="IPR036188">
    <property type="entry name" value="FAD/NAD-bd_sf"/>
</dbReference>
<dbReference type="InterPro" id="IPR023753">
    <property type="entry name" value="FAD/NAD-binding_dom"/>
</dbReference>
<dbReference type="InterPro" id="IPR009051">
    <property type="entry name" value="Helical_ferredxn"/>
</dbReference>
<dbReference type="InterPro" id="IPR019575">
    <property type="entry name" value="Nuop51_4Fe4S-bd"/>
</dbReference>
<dbReference type="InterPro" id="IPR037207">
    <property type="entry name" value="Nuop51_4Fe4S-bd_sf"/>
</dbReference>
<dbReference type="PANTHER" id="PTHR42783">
    <property type="entry name" value="GLUTAMATE SYNTHASE [NADPH] SMALL CHAIN"/>
    <property type="match status" value="1"/>
</dbReference>
<dbReference type="PANTHER" id="PTHR42783:SF3">
    <property type="entry name" value="GLUTAMATE SYNTHASE [NADPH] SMALL CHAIN-RELATED"/>
    <property type="match status" value="1"/>
</dbReference>
<dbReference type="Pfam" id="PF14691">
    <property type="entry name" value="Fer4_20"/>
    <property type="match status" value="1"/>
</dbReference>
<dbReference type="Pfam" id="PF10589">
    <property type="entry name" value="NADH_4Fe-4S"/>
    <property type="match status" value="1"/>
</dbReference>
<dbReference type="Pfam" id="PF07992">
    <property type="entry name" value="Pyr_redox_2"/>
    <property type="match status" value="1"/>
</dbReference>
<dbReference type="PRINTS" id="PR00419">
    <property type="entry name" value="ADXRDTASE"/>
</dbReference>
<dbReference type="SMART" id="SM00928">
    <property type="entry name" value="NADH_4Fe-4S"/>
    <property type="match status" value="1"/>
</dbReference>
<dbReference type="SUPFAM" id="SSF46548">
    <property type="entry name" value="alpha-helical ferredoxin"/>
    <property type="match status" value="1"/>
</dbReference>
<dbReference type="SUPFAM" id="SSF140490">
    <property type="entry name" value="Nqo1C-terminal domain-like"/>
    <property type="match status" value="1"/>
</dbReference>
<dbReference type="SUPFAM" id="SSF51971">
    <property type="entry name" value="Nucleotide-binding domain"/>
    <property type="match status" value="1"/>
</dbReference>
<evidence type="ECO:0000250" key="1"/>
<evidence type="ECO:0000255" key="2"/>
<evidence type="ECO:0000269" key="3">
    <source>
    </source>
</evidence>
<name>SFRB_GEOSK</name>